<gene>
    <name type="primary">LDHB</name>
</gene>
<sequence length="217" mass="24134">GKFIIPQIVKYSPNCIIIVVSNPVDILTYVTWKLSGLPKHRVIGSGCNLDSARFRYLMAEKLGIHPSSCHGWILGEHGDSRLAVWSGVNVAGVSLQELNPEMGTDNDSENWKEVHKMVVESAYEVIKLKGYTNWAIGLSVADLIESMLKNLSRIHPVSTMVRGMYGIESEVFLSLPCILNARGLTSVINQKLKDDEVAQLKKSADTLWDIQKDLKDL</sequence>
<reference key="1">
    <citation type="journal article" date="1989" name="J. Biol. Chem.">
        <title>Characterization of rabbit lactate dehydrogenase-M and lactate dehydrogenase-H cDNAs. Control of lactate dehydrogenase expression in rabbit muscle.</title>
        <authorList>
            <person name="Sass C."/>
            <person name="Briand M."/>
            <person name="Benslimane S."/>
            <person name="Renaud M."/>
            <person name="Briand Y."/>
        </authorList>
    </citation>
    <scope>NUCLEOTIDE SEQUENCE [MRNA]</scope>
</reference>
<evidence type="ECO:0000250" key="1"/>
<evidence type="ECO:0000250" key="2">
    <source>
        <dbReference type="UniProtKB" id="P07195"/>
    </source>
</evidence>
<evidence type="ECO:0000255" key="3">
    <source>
        <dbReference type="PROSITE-ProRule" id="PRU10002"/>
    </source>
</evidence>
<evidence type="ECO:0000305" key="4"/>
<feature type="chain" id="PRO_0000168463" description="L-lactate dehydrogenase B chain">
    <location>
        <begin position="1" status="less than"/>
        <end position="217"/>
    </location>
</feature>
<feature type="active site" description="Proton acceptor" evidence="3">
    <location>
        <position position="77"/>
    </location>
</feature>
<feature type="binding site" evidence="1">
    <location>
        <position position="22"/>
    </location>
    <ligand>
        <name>NAD(+)</name>
        <dbReference type="ChEBI" id="CHEBI:57540"/>
    </ligand>
</feature>
<feature type="binding site" evidence="1">
    <location>
        <position position="22"/>
    </location>
    <ligand>
        <name>substrate</name>
    </ligand>
</feature>
<feature type="binding site" evidence="1">
    <location>
        <position position="53"/>
    </location>
    <ligand>
        <name>substrate</name>
    </ligand>
</feature>
<feature type="binding site" evidence="1">
    <location>
        <position position="132"/>
    </location>
    <ligand>
        <name>substrate</name>
    </ligand>
</feature>
<feature type="modified residue" description="Phosphotyrosine" evidence="2">
    <location>
        <position position="123"/>
    </location>
</feature>
<feature type="modified residue" description="N6-acetyllysine" evidence="2">
    <location>
        <position position="212"/>
    </location>
</feature>
<feature type="non-terminal residue">
    <location>
        <position position="1"/>
    </location>
</feature>
<name>LDHB_RABIT</name>
<accession>P13490</accession>
<keyword id="KW-0007">Acetylation</keyword>
<keyword id="KW-0963">Cytoplasm</keyword>
<keyword id="KW-0472">Membrane</keyword>
<keyword id="KW-0496">Mitochondrion</keyword>
<keyword id="KW-0999">Mitochondrion inner membrane</keyword>
<keyword id="KW-0520">NAD</keyword>
<keyword id="KW-0560">Oxidoreductase</keyword>
<keyword id="KW-0597">Phosphoprotein</keyword>
<keyword id="KW-1185">Reference proteome</keyword>
<dbReference type="EC" id="1.1.1.27" evidence="2"/>
<dbReference type="EMBL" id="M22584">
    <property type="protein sequence ID" value="AAA31381.1"/>
    <property type="molecule type" value="mRNA"/>
</dbReference>
<dbReference type="PIR" id="B32957">
    <property type="entry name" value="B32957"/>
</dbReference>
<dbReference type="SMR" id="P13490"/>
<dbReference type="ChEMBL" id="CHEMBL4523187"/>
<dbReference type="PaxDb" id="9986-ENSOCUP00000022069"/>
<dbReference type="eggNOG" id="KOG1495">
    <property type="taxonomic scope" value="Eukaryota"/>
</dbReference>
<dbReference type="InParanoid" id="P13490"/>
<dbReference type="SABIO-RK" id="P13490"/>
<dbReference type="UniPathway" id="UPA00554">
    <property type="reaction ID" value="UER00611"/>
</dbReference>
<dbReference type="Proteomes" id="UP000001811">
    <property type="component" value="Unplaced"/>
</dbReference>
<dbReference type="GO" id="GO:0005743">
    <property type="term" value="C:mitochondrial inner membrane"/>
    <property type="evidence" value="ECO:0000250"/>
    <property type="project" value="UniProtKB"/>
</dbReference>
<dbReference type="GO" id="GO:0004459">
    <property type="term" value="F:L-lactate dehydrogenase activity"/>
    <property type="evidence" value="ECO:0000250"/>
    <property type="project" value="UniProtKB"/>
</dbReference>
<dbReference type="GO" id="GO:0006089">
    <property type="term" value="P:lactate metabolic process"/>
    <property type="evidence" value="ECO:0007669"/>
    <property type="project" value="TreeGrafter"/>
</dbReference>
<dbReference type="CDD" id="cd05293">
    <property type="entry name" value="LDH_1"/>
    <property type="match status" value="1"/>
</dbReference>
<dbReference type="FunFam" id="3.90.110.10:FF:000003">
    <property type="entry name" value="L-lactate dehydrogenase A chain"/>
    <property type="match status" value="1"/>
</dbReference>
<dbReference type="Gene3D" id="3.90.110.10">
    <property type="entry name" value="Lactate dehydrogenase/glycoside hydrolase, family 4, C-terminal"/>
    <property type="match status" value="1"/>
</dbReference>
<dbReference type="Gene3D" id="3.40.50.720">
    <property type="entry name" value="NAD(P)-binding Rossmann-like Domain"/>
    <property type="match status" value="1"/>
</dbReference>
<dbReference type="InterPro" id="IPR001557">
    <property type="entry name" value="L-lactate/malate_DH"/>
</dbReference>
<dbReference type="InterPro" id="IPR018177">
    <property type="entry name" value="L-lactate_DH_AS"/>
</dbReference>
<dbReference type="InterPro" id="IPR022383">
    <property type="entry name" value="Lactate/malate_DH_C"/>
</dbReference>
<dbReference type="InterPro" id="IPR001236">
    <property type="entry name" value="Lactate/malate_DH_N"/>
</dbReference>
<dbReference type="InterPro" id="IPR015955">
    <property type="entry name" value="Lactate_DH/Glyco_Ohase_4_C"/>
</dbReference>
<dbReference type="InterPro" id="IPR036291">
    <property type="entry name" value="NAD(P)-bd_dom_sf"/>
</dbReference>
<dbReference type="PANTHER" id="PTHR43128">
    <property type="entry name" value="L-2-HYDROXYCARBOXYLATE DEHYDROGENASE (NAD(P)(+))"/>
    <property type="match status" value="1"/>
</dbReference>
<dbReference type="PANTHER" id="PTHR43128:SF2">
    <property type="entry name" value="L-LACTATE DEHYDROGENASE B CHAIN"/>
    <property type="match status" value="1"/>
</dbReference>
<dbReference type="Pfam" id="PF02866">
    <property type="entry name" value="Ldh_1_C"/>
    <property type="match status" value="1"/>
</dbReference>
<dbReference type="Pfam" id="PF00056">
    <property type="entry name" value="Ldh_1_N"/>
    <property type="match status" value="1"/>
</dbReference>
<dbReference type="PRINTS" id="PR00086">
    <property type="entry name" value="LLDHDRGNASE"/>
</dbReference>
<dbReference type="SUPFAM" id="SSF56327">
    <property type="entry name" value="LDH C-terminal domain-like"/>
    <property type="match status" value="1"/>
</dbReference>
<dbReference type="SUPFAM" id="SSF51735">
    <property type="entry name" value="NAD(P)-binding Rossmann-fold domains"/>
    <property type="match status" value="1"/>
</dbReference>
<dbReference type="PROSITE" id="PS00064">
    <property type="entry name" value="L_LDH"/>
    <property type="match status" value="1"/>
</dbReference>
<proteinExistence type="evidence at transcript level"/>
<protein>
    <recommendedName>
        <fullName>L-lactate dehydrogenase B chain</fullName>
        <shortName>LDH-B</shortName>
        <ecNumber evidence="2">1.1.1.27</ecNumber>
    </recommendedName>
    <alternativeName>
        <fullName>LDH heart subunit</fullName>
        <shortName>LDH-H</shortName>
    </alternativeName>
</protein>
<comment type="function">
    <text evidence="2">Interconverts simultaneously and stereospecifically pyruvate and lactate with concomitant interconversion of NADH and NAD(+).</text>
</comment>
<comment type="catalytic activity">
    <reaction evidence="2">
        <text>(S)-lactate + NAD(+) = pyruvate + NADH + H(+)</text>
        <dbReference type="Rhea" id="RHEA:23444"/>
        <dbReference type="ChEBI" id="CHEBI:15361"/>
        <dbReference type="ChEBI" id="CHEBI:15378"/>
        <dbReference type="ChEBI" id="CHEBI:16651"/>
        <dbReference type="ChEBI" id="CHEBI:57540"/>
        <dbReference type="ChEBI" id="CHEBI:57945"/>
        <dbReference type="EC" id="1.1.1.27"/>
    </reaction>
    <physiologicalReaction direction="left-to-right" evidence="2">
        <dbReference type="Rhea" id="RHEA:23445"/>
    </physiologicalReaction>
    <physiologicalReaction direction="right-to-left" evidence="2">
        <dbReference type="Rhea" id="RHEA:23446"/>
    </physiologicalReaction>
</comment>
<comment type="pathway">
    <text evidence="2">Fermentation; pyruvate fermentation to lactate; (S)-lactate from pyruvate: step 1/1.</text>
</comment>
<comment type="subunit">
    <text evidence="2">Homotetramer. Interacts with PTEN upstream reading frame protein MP31; the interaction leads to inhibition of mitochondrial lactate dehydrogenase activity, preventing conversion of lactate to pyruvate in mitochondria.</text>
</comment>
<comment type="subcellular location">
    <subcellularLocation>
        <location evidence="1">Cytoplasm</location>
    </subcellularLocation>
    <subcellularLocation>
        <location evidence="2">Mitochondrion inner membrane</location>
        <topology evidence="4">Peripheral membrane protein</topology>
    </subcellularLocation>
</comment>
<comment type="similarity">
    <text evidence="4">Belongs to the LDH/MDH superfamily. LDH family.</text>
</comment>
<organism>
    <name type="scientific">Oryctolagus cuniculus</name>
    <name type="common">Rabbit</name>
    <dbReference type="NCBI Taxonomy" id="9986"/>
    <lineage>
        <taxon>Eukaryota</taxon>
        <taxon>Metazoa</taxon>
        <taxon>Chordata</taxon>
        <taxon>Craniata</taxon>
        <taxon>Vertebrata</taxon>
        <taxon>Euteleostomi</taxon>
        <taxon>Mammalia</taxon>
        <taxon>Eutheria</taxon>
        <taxon>Euarchontoglires</taxon>
        <taxon>Glires</taxon>
        <taxon>Lagomorpha</taxon>
        <taxon>Leporidae</taxon>
        <taxon>Oryctolagus</taxon>
    </lineage>
</organism>